<accession>Q05502</accession>
<comment type="function">
    <text>Recognizes the DNA sequence 5'-ATTAA-3'. Transcriptional repressor. May play a role in hematopoietic differentiation.</text>
</comment>
<comment type="subcellular location">
    <subcellularLocation>
        <location evidence="4">Nucleus</location>
    </subcellularLocation>
</comment>
<comment type="tissue specificity">
    <text evidence="3">In all hematopoietic tissues except peripheral blood erythrocytes and in the liver and lung.</text>
</comment>
<proteinExistence type="evidence at protein level"/>
<protein>
    <recommendedName>
        <fullName>Hematopoietically-expressed homeobox protein HHEX</fullName>
        <shortName>Homeobox protein HEX</shortName>
    </recommendedName>
    <alternativeName>
        <fullName>Homeobox protein PRH</fullName>
    </alternativeName>
</protein>
<organism>
    <name type="scientific">Gallus gallus</name>
    <name type="common">Chicken</name>
    <dbReference type="NCBI Taxonomy" id="9031"/>
    <lineage>
        <taxon>Eukaryota</taxon>
        <taxon>Metazoa</taxon>
        <taxon>Chordata</taxon>
        <taxon>Craniata</taxon>
        <taxon>Vertebrata</taxon>
        <taxon>Euteleostomi</taxon>
        <taxon>Archelosauria</taxon>
        <taxon>Archosauria</taxon>
        <taxon>Dinosauria</taxon>
        <taxon>Saurischia</taxon>
        <taxon>Theropoda</taxon>
        <taxon>Coelurosauria</taxon>
        <taxon>Aves</taxon>
        <taxon>Neognathae</taxon>
        <taxon>Galloanserae</taxon>
        <taxon>Galliformes</taxon>
        <taxon>Phasianidae</taxon>
        <taxon>Phasianinae</taxon>
        <taxon>Gallus</taxon>
    </lineage>
</organism>
<name>HHEX_CHICK</name>
<reference key="1">
    <citation type="journal article" date="1992" name="Nucleic Acids Res.">
        <title>Identification of a novel vertebrate homeobox gene expressed in haematopoietic cells.</title>
        <authorList>
            <person name="Crompton M.R."/>
            <person name="Bartlett T.J."/>
            <person name="Macgregor A.D."/>
            <person name="Manfioletti G."/>
            <person name="Buratti E."/>
            <person name="Giancotti V."/>
            <person name="Goodwin G.H."/>
        </authorList>
    </citation>
    <scope>NUCLEOTIDE SEQUENCE [MRNA]</scope>
    <scope>DNA-BINDING</scope>
    <scope>TISSUE SPECIFICITY</scope>
    <source>
        <tissue>Monoblast</tissue>
    </source>
</reference>
<feature type="chain" id="PRO_0000049073" description="Hematopoietically-expressed homeobox protein HHEX">
    <location>
        <begin position="1"/>
        <end position="277"/>
    </location>
</feature>
<feature type="DNA-binding region" description="Homeobox" evidence="1">
    <location>
        <begin position="144"/>
        <end position="203"/>
    </location>
</feature>
<feature type="region of interest" description="Disordered" evidence="2">
    <location>
        <begin position="47"/>
        <end position="69"/>
    </location>
</feature>
<feature type="region of interest" description="Disordered" evidence="2">
    <location>
        <begin position="199"/>
        <end position="277"/>
    </location>
</feature>
<feature type="compositionally biased region" description="Pro residues" evidence="2">
    <location>
        <begin position="52"/>
        <end position="63"/>
    </location>
</feature>
<feature type="compositionally biased region" description="Basic and acidic residues" evidence="2">
    <location>
        <begin position="210"/>
        <end position="226"/>
    </location>
</feature>
<feature type="compositionally biased region" description="Acidic residues" evidence="2">
    <location>
        <begin position="250"/>
        <end position="266"/>
    </location>
</feature>
<evidence type="ECO:0000255" key="1">
    <source>
        <dbReference type="PROSITE-ProRule" id="PRU00108"/>
    </source>
</evidence>
<evidence type="ECO:0000256" key="2">
    <source>
        <dbReference type="SAM" id="MobiDB-lite"/>
    </source>
</evidence>
<evidence type="ECO:0000269" key="3">
    <source>
    </source>
</evidence>
<evidence type="ECO:0000305" key="4"/>
<keyword id="KW-0217">Developmental protein</keyword>
<keyword id="KW-0221">Differentiation</keyword>
<keyword id="KW-0238">DNA-binding</keyword>
<keyword id="KW-0371">Homeobox</keyword>
<keyword id="KW-0539">Nucleus</keyword>
<keyword id="KW-1185">Reference proteome</keyword>
<keyword id="KW-0678">Repressor</keyword>
<keyword id="KW-0804">Transcription</keyword>
<keyword id="KW-0805">Transcription regulation</keyword>
<gene>
    <name type="primary">HHEX</name>
    <name type="synonym">PRH</name>
</gene>
<sequence>MQYQAPGAAPAAALGVGVPLYAPTPLLQPAHPTPFYIEDILGRGPAAAPAPHSLPAPPPPTLPSPNSSFTSLVAPYRTPVYEPTPIHPAFSHHLAATYGTGAYAGPLYSFPRAVGDYTHALIRQDPLGKPLLWSPFIQRPLHKRKGGQVRFSNEQTIELEKKFETQKYLSPPERKRLAKLLQLSERQVKTWFQNRRAKWRRLKQENPQATKKEEAEGTGDHGDPRSEGSPSPAGGGEAEPQDSPSAASQEDPESDVSDDSDQEVDIEGDKGFYSATR</sequence>
<dbReference type="EMBL" id="X64711">
    <property type="protein sequence ID" value="CAA45966.1"/>
    <property type="molecule type" value="mRNA"/>
</dbReference>
<dbReference type="PIR" id="S78063">
    <property type="entry name" value="S78063"/>
</dbReference>
<dbReference type="RefSeq" id="NP_990583.1">
    <property type="nucleotide sequence ID" value="NM_205252.1"/>
</dbReference>
<dbReference type="SMR" id="Q05502"/>
<dbReference type="FunCoup" id="Q05502">
    <property type="interactions" value="203"/>
</dbReference>
<dbReference type="STRING" id="9031.ENSGALP00000064983"/>
<dbReference type="PaxDb" id="9031-ENSGALP00000041279"/>
<dbReference type="GeneID" id="396182"/>
<dbReference type="KEGG" id="gga:396182"/>
<dbReference type="CTD" id="3087"/>
<dbReference type="VEuPathDB" id="HostDB:geneid_396182"/>
<dbReference type="eggNOG" id="KOG0483">
    <property type="taxonomic scope" value="Eukaryota"/>
</dbReference>
<dbReference type="InParanoid" id="Q05502"/>
<dbReference type="OrthoDB" id="6159439at2759"/>
<dbReference type="PhylomeDB" id="Q05502"/>
<dbReference type="PRO" id="PR:Q05502"/>
<dbReference type="Proteomes" id="UP000000539">
    <property type="component" value="Unassembled WGS sequence"/>
</dbReference>
<dbReference type="GO" id="GO:0005634">
    <property type="term" value="C:nucleus"/>
    <property type="evidence" value="ECO:0000250"/>
    <property type="project" value="UniProtKB"/>
</dbReference>
<dbReference type="GO" id="GO:0000981">
    <property type="term" value="F:DNA-binding transcription factor activity, RNA polymerase II-specific"/>
    <property type="evidence" value="ECO:0007669"/>
    <property type="project" value="InterPro"/>
</dbReference>
<dbReference type="GO" id="GO:0000978">
    <property type="term" value="F:RNA polymerase II cis-regulatory region sequence-specific DNA binding"/>
    <property type="evidence" value="ECO:0000318"/>
    <property type="project" value="GO_Central"/>
</dbReference>
<dbReference type="GO" id="GO:0043565">
    <property type="term" value="F:sequence-specific DNA binding"/>
    <property type="evidence" value="ECO:0000314"/>
    <property type="project" value="UniProtKB"/>
</dbReference>
<dbReference type="GO" id="GO:0030154">
    <property type="term" value="P:cell differentiation"/>
    <property type="evidence" value="ECO:0000318"/>
    <property type="project" value="GO_Central"/>
</dbReference>
<dbReference type="GO" id="GO:0045892">
    <property type="term" value="P:negative regulation of DNA-templated transcription"/>
    <property type="evidence" value="ECO:0000250"/>
    <property type="project" value="UniProtKB"/>
</dbReference>
<dbReference type="GO" id="GO:0006357">
    <property type="term" value="P:regulation of transcription by RNA polymerase II"/>
    <property type="evidence" value="ECO:0000318"/>
    <property type="project" value="GO_Central"/>
</dbReference>
<dbReference type="CDD" id="cd00086">
    <property type="entry name" value="homeodomain"/>
    <property type="match status" value="1"/>
</dbReference>
<dbReference type="FunFam" id="1.10.10.60:FF:000178">
    <property type="entry name" value="hematopoietically-expressed homeobox protein HHEX"/>
    <property type="match status" value="1"/>
</dbReference>
<dbReference type="Gene3D" id="1.10.10.60">
    <property type="entry name" value="Homeodomain-like"/>
    <property type="match status" value="1"/>
</dbReference>
<dbReference type="InterPro" id="IPR001356">
    <property type="entry name" value="HD"/>
</dbReference>
<dbReference type="InterPro" id="IPR020479">
    <property type="entry name" value="HD_metazoa"/>
</dbReference>
<dbReference type="InterPro" id="IPR017970">
    <property type="entry name" value="Homeobox_CS"/>
</dbReference>
<dbReference type="InterPro" id="IPR051000">
    <property type="entry name" value="Homeobox_DNA-bind_prot"/>
</dbReference>
<dbReference type="InterPro" id="IPR009057">
    <property type="entry name" value="Homeodomain-like_sf"/>
</dbReference>
<dbReference type="PANTHER" id="PTHR24324:SF5">
    <property type="entry name" value="HEMATOPOIETICALLY-EXPRESSED HOMEOBOX PROTEIN HHEX"/>
    <property type="match status" value="1"/>
</dbReference>
<dbReference type="PANTHER" id="PTHR24324">
    <property type="entry name" value="HOMEOBOX PROTEIN HHEX"/>
    <property type="match status" value="1"/>
</dbReference>
<dbReference type="Pfam" id="PF00046">
    <property type="entry name" value="Homeodomain"/>
    <property type="match status" value="1"/>
</dbReference>
<dbReference type="PRINTS" id="PR00024">
    <property type="entry name" value="HOMEOBOX"/>
</dbReference>
<dbReference type="SMART" id="SM00389">
    <property type="entry name" value="HOX"/>
    <property type="match status" value="1"/>
</dbReference>
<dbReference type="SUPFAM" id="SSF46689">
    <property type="entry name" value="Homeodomain-like"/>
    <property type="match status" value="1"/>
</dbReference>
<dbReference type="PROSITE" id="PS00027">
    <property type="entry name" value="HOMEOBOX_1"/>
    <property type="match status" value="1"/>
</dbReference>
<dbReference type="PROSITE" id="PS50071">
    <property type="entry name" value="HOMEOBOX_2"/>
    <property type="match status" value="1"/>
</dbReference>